<proteinExistence type="evidence at protein level"/>
<protein>
    <recommendedName>
        <fullName evidence="3">Tau-AnmTx Ueq 12-1</fullName>
        <shortName evidence="3">Ueq 12-1</shortName>
    </recommendedName>
</protein>
<keyword id="KW-0002">3D-structure</keyword>
<keyword id="KW-0044">Antibiotic</keyword>
<keyword id="KW-0929">Antimicrobial</keyword>
<keyword id="KW-0165">Cleavage on pair of basic residues</keyword>
<keyword id="KW-0903">Direct protein sequencing</keyword>
<keyword id="KW-1015">Disulfide bond</keyword>
<keyword id="KW-0964">Secreted</keyword>
<keyword id="KW-0732">Signal</keyword>
<keyword id="KW-0800">Toxin</keyword>
<sequence>MCLLMLVLGAMYVQGWHSAGFGKRTLKKRCYPGQPGCGHCSRPNYCEGARCESGFHDCGSDHWCDASGDRCCCA</sequence>
<comment type="function">
    <text evidence="2">Potentiates activation of mammalian TRPA1, a non-selective cation channel involved in perception of pain, in vitro yet has an analgesic and anti-inflammatory effect in vivo. Has antibacterial activity against C.glutamicum (MIC=50 uM) and, to a lesser extent, against S.aureus but not against P.aeruginosa or E.coli.</text>
</comment>
<comment type="subcellular location">
    <subcellularLocation>
        <location evidence="2">Secreted</location>
    </subcellularLocation>
</comment>
<comment type="tissue specificity">
    <text evidence="2">Detected in mucus secreted from ectoderm.</text>
</comment>
<comment type="mass spectrometry"/>
<comment type="miscellaneous">
    <text evidence="2">Negative results: has no effect on mammalian TRPV1 and TRPV3.</text>
</comment>
<comment type="similarity">
    <text evidence="4">Belongs to the Cnidaria small cysteine-rich protein (SCRiP) family.</text>
</comment>
<organism>
    <name type="scientific">Urticina eques</name>
    <name type="common">Sea anemone</name>
    <dbReference type="NCBI Taxonomy" id="417072"/>
    <lineage>
        <taxon>Eukaryota</taxon>
        <taxon>Metazoa</taxon>
        <taxon>Cnidaria</taxon>
        <taxon>Anthozoa</taxon>
        <taxon>Hexacorallia</taxon>
        <taxon>Actiniaria</taxon>
        <taxon>Actiniidae</taxon>
        <taxon>Urticina</taxon>
    </lineage>
</organism>
<dbReference type="EMBL" id="LT600337">
    <property type="protein sequence ID" value="SCA59377.1"/>
    <property type="molecule type" value="mRNA"/>
</dbReference>
<dbReference type="PDB" id="5LAH">
    <property type="method" value="NMR"/>
    <property type="chains" value="A=30-74"/>
</dbReference>
<dbReference type="PDBsum" id="5LAH"/>
<dbReference type="BMRB" id="C0HK26"/>
<dbReference type="SMR" id="C0HK26"/>
<dbReference type="GO" id="GO:0005576">
    <property type="term" value="C:extracellular region"/>
    <property type="evidence" value="ECO:0007669"/>
    <property type="project" value="UniProtKB-SubCell"/>
</dbReference>
<dbReference type="GO" id="GO:0090729">
    <property type="term" value="F:toxin activity"/>
    <property type="evidence" value="ECO:0007669"/>
    <property type="project" value="UniProtKB-KW"/>
</dbReference>
<dbReference type="GO" id="GO:0042742">
    <property type="term" value="P:defense response to bacterium"/>
    <property type="evidence" value="ECO:0007669"/>
    <property type="project" value="UniProtKB-KW"/>
</dbReference>
<name>TX121_URTEQ</name>
<accession>C0HK26</accession>
<accession>A0A1X6QS92</accession>
<accession>A0A1Z0YU43</accession>
<reference evidence="6" key="1">
    <citation type="journal article" date="2017" name="Toxins">
        <title>New disulfide-stabilized fold provides sea anemone peptide to exhibit both antimicrobial and TRPA1 potentiating properties.</title>
        <authorList>
            <person name="Logashina Y.A."/>
            <person name="Solstad R.G."/>
            <person name="Mineev K.S."/>
            <person name="Korolkova Y.V."/>
            <person name="Mosharova I.V."/>
            <person name="Dyachenko I.A."/>
            <person name="Palikov V.A."/>
            <person name="Palikova Y.A."/>
            <person name="Murashev A.N."/>
            <person name="Arseniev A.S."/>
            <person name="Kozlov S.A."/>
            <person name="Stensvag K."/>
            <person name="Haug T."/>
            <person name="Andreev Y.A."/>
        </authorList>
    </citation>
    <scope>NUCLEOTIDE SEQUENCE [MRNA]</scope>
    <scope>PROTEIN SEQUENCE OF 30-63</scope>
    <scope>STRUCTURE BY NMR OF 30-74</scope>
    <scope>FUNCTION</scope>
    <scope>SUBCELLULAR LOCATION</scope>
    <scope>TISSUE SPECIFICITY</scope>
    <scope>MASS SPECTROMETRY</scope>
    <scope>DISULFIDE BONDS</scope>
    <source>
        <tissue>Tentacle</tissue>
    </source>
</reference>
<feature type="signal peptide" evidence="1">
    <location>
        <begin position="1"/>
        <end position="18"/>
    </location>
</feature>
<feature type="propeptide" id="PRO_0000440863" description="Removed in mature form" evidence="5">
    <location>
        <begin position="19"/>
        <end position="27"/>
    </location>
</feature>
<feature type="peptide" id="PRO_0000440864" description="Tau-AnmTx Ueq 12-1" evidence="2">
    <location>
        <begin position="30"/>
        <end position="74"/>
    </location>
</feature>
<feature type="disulfide bond" evidence="2 7">
    <location>
        <begin position="30"/>
        <end position="37"/>
    </location>
</feature>
<feature type="disulfide bond" evidence="2 7">
    <location>
        <begin position="40"/>
        <end position="71"/>
    </location>
</feature>
<feature type="disulfide bond" evidence="2 7">
    <location>
        <begin position="46"/>
        <end position="64"/>
    </location>
</feature>
<feature type="disulfide bond" evidence="2 7">
    <location>
        <begin position="51"/>
        <end position="72"/>
    </location>
</feature>
<feature type="disulfide bond" evidence="2 7">
    <location>
        <begin position="58"/>
        <end position="73"/>
    </location>
</feature>
<feature type="strand" evidence="8">
    <location>
        <begin position="45"/>
        <end position="49"/>
    </location>
</feature>
<feature type="helix" evidence="8">
    <location>
        <begin position="59"/>
        <end position="61"/>
    </location>
</feature>
<feature type="strand" evidence="8">
    <location>
        <begin position="70"/>
        <end position="73"/>
    </location>
</feature>
<evidence type="ECO:0000255" key="1"/>
<evidence type="ECO:0000269" key="2">
    <source>
    </source>
</evidence>
<evidence type="ECO:0000303" key="3">
    <source>
    </source>
</evidence>
<evidence type="ECO:0000305" key="4"/>
<evidence type="ECO:0000305" key="5">
    <source>
    </source>
</evidence>
<evidence type="ECO:0000312" key="6">
    <source>
        <dbReference type="EMBL" id="SCA59377.1"/>
    </source>
</evidence>
<evidence type="ECO:0007744" key="7">
    <source>
        <dbReference type="PDB" id="5LAH"/>
    </source>
</evidence>
<evidence type="ECO:0007829" key="8">
    <source>
        <dbReference type="PDB" id="5LAH"/>
    </source>
</evidence>